<proteinExistence type="inferred from homology"/>
<protein>
    <recommendedName>
        <fullName evidence="1">Queuine tRNA-ribosyltransferase</fullName>
        <ecNumber evidence="1">2.4.2.29</ecNumber>
    </recommendedName>
    <alternativeName>
        <fullName evidence="1">Guanine insertion enzyme</fullName>
    </alternativeName>
    <alternativeName>
        <fullName evidence="1">tRNA-guanine transglycosylase</fullName>
    </alternativeName>
</protein>
<dbReference type="EC" id="2.4.2.29" evidence="1"/>
<dbReference type="EMBL" id="AP008229">
    <property type="protein sequence ID" value="BAE69107.1"/>
    <property type="molecule type" value="Genomic_DNA"/>
</dbReference>
<dbReference type="RefSeq" id="WP_011259125.1">
    <property type="nucleotide sequence ID" value="NC_007705.1"/>
</dbReference>
<dbReference type="SMR" id="Q2P2X0"/>
<dbReference type="KEGG" id="xom:XOO2352"/>
<dbReference type="HOGENOM" id="CLU_022060_0_1_6"/>
<dbReference type="UniPathway" id="UPA00392"/>
<dbReference type="GO" id="GO:0005829">
    <property type="term" value="C:cytosol"/>
    <property type="evidence" value="ECO:0007669"/>
    <property type="project" value="TreeGrafter"/>
</dbReference>
<dbReference type="GO" id="GO:0046872">
    <property type="term" value="F:metal ion binding"/>
    <property type="evidence" value="ECO:0007669"/>
    <property type="project" value="UniProtKB-KW"/>
</dbReference>
<dbReference type="GO" id="GO:0008479">
    <property type="term" value="F:tRNA-guanosine(34) queuine transglycosylase activity"/>
    <property type="evidence" value="ECO:0007669"/>
    <property type="project" value="UniProtKB-UniRule"/>
</dbReference>
<dbReference type="GO" id="GO:0008616">
    <property type="term" value="P:queuosine biosynthetic process"/>
    <property type="evidence" value="ECO:0007669"/>
    <property type="project" value="UniProtKB-UniRule"/>
</dbReference>
<dbReference type="GO" id="GO:0002099">
    <property type="term" value="P:tRNA wobble guanine modification"/>
    <property type="evidence" value="ECO:0007669"/>
    <property type="project" value="TreeGrafter"/>
</dbReference>
<dbReference type="GO" id="GO:0101030">
    <property type="term" value="P:tRNA-guanine transglycosylation"/>
    <property type="evidence" value="ECO:0007669"/>
    <property type="project" value="InterPro"/>
</dbReference>
<dbReference type="FunFam" id="3.20.20.105:FF:000001">
    <property type="entry name" value="Queuine tRNA-ribosyltransferase"/>
    <property type="match status" value="1"/>
</dbReference>
<dbReference type="Gene3D" id="3.20.20.105">
    <property type="entry name" value="Queuine tRNA-ribosyltransferase-like"/>
    <property type="match status" value="1"/>
</dbReference>
<dbReference type="HAMAP" id="MF_00168">
    <property type="entry name" value="Q_tRNA_Tgt"/>
    <property type="match status" value="1"/>
</dbReference>
<dbReference type="InterPro" id="IPR050076">
    <property type="entry name" value="ArchSynthase1/Queuine_TRR"/>
</dbReference>
<dbReference type="InterPro" id="IPR004803">
    <property type="entry name" value="TGT"/>
</dbReference>
<dbReference type="InterPro" id="IPR036511">
    <property type="entry name" value="TGT-like_sf"/>
</dbReference>
<dbReference type="InterPro" id="IPR002616">
    <property type="entry name" value="tRNA_ribo_trans-like"/>
</dbReference>
<dbReference type="NCBIfam" id="TIGR00430">
    <property type="entry name" value="Q_tRNA_tgt"/>
    <property type="match status" value="1"/>
</dbReference>
<dbReference type="NCBIfam" id="TIGR00449">
    <property type="entry name" value="tgt_general"/>
    <property type="match status" value="1"/>
</dbReference>
<dbReference type="PANTHER" id="PTHR46499">
    <property type="entry name" value="QUEUINE TRNA-RIBOSYLTRANSFERASE"/>
    <property type="match status" value="1"/>
</dbReference>
<dbReference type="PANTHER" id="PTHR46499:SF1">
    <property type="entry name" value="QUEUINE TRNA-RIBOSYLTRANSFERASE"/>
    <property type="match status" value="1"/>
</dbReference>
<dbReference type="Pfam" id="PF01702">
    <property type="entry name" value="TGT"/>
    <property type="match status" value="1"/>
</dbReference>
<dbReference type="SUPFAM" id="SSF51713">
    <property type="entry name" value="tRNA-guanine transglycosylase"/>
    <property type="match status" value="1"/>
</dbReference>
<organism>
    <name type="scientific">Xanthomonas oryzae pv. oryzae (strain MAFF 311018)</name>
    <dbReference type="NCBI Taxonomy" id="342109"/>
    <lineage>
        <taxon>Bacteria</taxon>
        <taxon>Pseudomonadati</taxon>
        <taxon>Pseudomonadota</taxon>
        <taxon>Gammaproteobacteria</taxon>
        <taxon>Lysobacterales</taxon>
        <taxon>Lysobacteraceae</taxon>
        <taxon>Xanthomonas</taxon>
    </lineage>
</organism>
<gene>
    <name evidence="1" type="primary">tgt</name>
    <name type="ordered locus">XOO2352</name>
</gene>
<keyword id="KW-0328">Glycosyltransferase</keyword>
<keyword id="KW-0479">Metal-binding</keyword>
<keyword id="KW-0671">Queuosine biosynthesis</keyword>
<keyword id="KW-0808">Transferase</keyword>
<keyword id="KW-0819">tRNA processing</keyword>
<keyword id="KW-0862">Zinc</keyword>
<accession>Q2P2X0</accession>
<evidence type="ECO:0000255" key="1">
    <source>
        <dbReference type="HAMAP-Rule" id="MF_00168"/>
    </source>
</evidence>
<reference key="1">
    <citation type="journal article" date="2005" name="Jpn. Agric. Res. Q.">
        <title>Genome sequence of Xanthomonas oryzae pv. oryzae suggests contribution of large numbers of effector genes and insertion sequences to its race diversity.</title>
        <authorList>
            <person name="Ochiai H."/>
            <person name="Inoue Y."/>
            <person name="Takeya M."/>
            <person name="Sasaki A."/>
            <person name="Kaku H."/>
        </authorList>
    </citation>
    <scope>NUCLEOTIDE SEQUENCE [LARGE SCALE GENOMIC DNA]</scope>
    <source>
        <strain>MAFF 311018</strain>
    </source>
</reference>
<comment type="function">
    <text evidence="1">Catalyzes the base-exchange of a guanine (G) residue with the queuine precursor 7-aminomethyl-7-deazaguanine (PreQ1) at position 34 (anticodon wobble position) in tRNAs with GU(N) anticodons (tRNA-Asp, -Asn, -His and -Tyr). Catalysis occurs through a double-displacement mechanism. The nucleophile active site attacks the C1' of nucleotide 34 to detach the guanine base from the RNA, forming a covalent enzyme-RNA intermediate. The proton acceptor active site deprotonates the incoming PreQ1, allowing a nucleophilic attack on the C1' of the ribose to form the product. After dissociation, two additional enzymatic reactions on the tRNA convert PreQ1 to queuine (Q), resulting in the hypermodified nucleoside queuosine (7-(((4,5-cis-dihydroxy-2-cyclopenten-1-yl)amino)methyl)-7-deazaguanosine).</text>
</comment>
<comment type="catalytic activity">
    <reaction evidence="1">
        <text>7-aminomethyl-7-carbaguanine + guanosine(34) in tRNA = 7-aminomethyl-7-carbaguanosine(34) in tRNA + guanine</text>
        <dbReference type="Rhea" id="RHEA:24104"/>
        <dbReference type="Rhea" id="RHEA-COMP:10341"/>
        <dbReference type="Rhea" id="RHEA-COMP:10342"/>
        <dbReference type="ChEBI" id="CHEBI:16235"/>
        <dbReference type="ChEBI" id="CHEBI:58703"/>
        <dbReference type="ChEBI" id="CHEBI:74269"/>
        <dbReference type="ChEBI" id="CHEBI:82833"/>
        <dbReference type="EC" id="2.4.2.29"/>
    </reaction>
</comment>
<comment type="cofactor">
    <cofactor evidence="1">
        <name>Zn(2+)</name>
        <dbReference type="ChEBI" id="CHEBI:29105"/>
    </cofactor>
    <text evidence="1">Binds 1 zinc ion per subunit.</text>
</comment>
<comment type="pathway">
    <text evidence="1">tRNA modification; tRNA-queuosine biosynthesis.</text>
</comment>
<comment type="subunit">
    <text evidence="1">Homodimer. Within each dimer, one monomer is responsible for RNA recognition and catalysis, while the other monomer binds to the replacement base PreQ1.</text>
</comment>
<comment type="similarity">
    <text evidence="1">Belongs to the queuine tRNA-ribosyltransferase family.</text>
</comment>
<sequence length="381" mass="42114">MSRLQFQLQATDGHARRGRLTFPRGTVETPAFMPVGTYGSVKGILPEHIRALGAEIILGNTFHLYLRPGLDVIGDHGGLHGFARWDGPILTDSGGFQVFSLAHRRKITEQGVTFSSPTDGARVFLGPEESMKIQKVLDSDIVMIFDECTPYPATEDLARRSMELSLRWAQRSRDAHDGLGNDAALFGIVQGGVHPDLRSRSLDGLQSIGFDGYAIGGLAVGEPEHERNAMLEHLHPRLPAECPRYLMGVGRPEDLVEGVARGVDMFDCVMPTRNARNGHYFTSFGTVRIRNAKYERDLDTIEPGCGCHACSSGYTRSYLRHLDRCNEMLAPMLGTLHNLWYYEKLMADMRAAIASGTFVEFRRSFYAARGATTPPLPGETS</sequence>
<name>TGT_XANOM</name>
<feature type="chain" id="PRO_1000016890" description="Queuine tRNA-ribosyltransferase">
    <location>
        <begin position="1"/>
        <end position="381"/>
    </location>
</feature>
<feature type="region of interest" description="RNA binding" evidence="1">
    <location>
        <begin position="248"/>
        <end position="254"/>
    </location>
</feature>
<feature type="region of interest" description="RNA binding; important for wobble base 34 recognition" evidence="1">
    <location>
        <begin position="272"/>
        <end position="276"/>
    </location>
</feature>
<feature type="active site" description="Proton acceptor" evidence="1">
    <location>
        <position position="92"/>
    </location>
</feature>
<feature type="active site" description="Nucleophile" evidence="1">
    <location>
        <position position="267"/>
    </location>
</feature>
<feature type="binding site" evidence="1">
    <location>
        <begin position="92"/>
        <end position="96"/>
    </location>
    <ligand>
        <name>substrate</name>
    </ligand>
</feature>
<feature type="binding site" evidence="1">
    <location>
        <position position="146"/>
    </location>
    <ligand>
        <name>substrate</name>
    </ligand>
</feature>
<feature type="binding site" evidence="1">
    <location>
        <position position="190"/>
    </location>
    <ligand>
        <name>substrate</name>
    </ligand>
</feature>
<feature type="binding site" evidence="1">
    <location>
        <position position="217"/>
    </location>
    <ligand>
        <name>substrate</name>
    </ligand>
</feature>
<feature type="binding site" evidence="1">
    <location>
        <position position="305"/>
    </location>
    <ligand>
        <name>Zn(2+)</name>
        <dbReference type="ChEBI" id="CHEBI:29105"/>
    </ligand>
</feature>
<feature type="binding site" evidence="1">
    <location>
        <position position="307"/>
    </location>
    <ligand>
        <name>Zn(2+)</name>
        <dbReference type="ChEBI" id="CHEBI:29105"/>
    </ligand>
</feature>
<feature type="binding site" evidence="1">
    <location>
        <position position="310"/>
    </location>
    <ligand>
        <name>Zn(2+)</name>
        <dbReference type="ChEBI" id="CHEBI:29105"/>
    </ligand>
</feature>
<feature type="binding site" evidence="1">
    <location>
        <position position="337"/>
    </location>
    <ligand>
        <name>Zn(2+)</name>
        <dbReference type="ChEBI" id="CHEBI:29105"/>
    </ligand>
</feature>